<name>Y2022_MYXXD</name>
<dbReference type="EMBL" id="CP000113">
    <property type="protein sequence ID" value="ABF91720.1"/>
    <property type="molecule type" value="Genomic_DNA"/>
</dbReference>
<dbReference type="RefSeq" id="WP_011552106.1">
    <property type="nucleotide sequence ID" value="NC_008095.1"/>
</dbReference>
<dbReference type="SMR" id="Q1DAS2"/>
<dbReference type="STRING" id="246197.MXAN_2022"/>
<dbReference type="EnsemblBacteria" id="ABF91720">
    <property type="protein sequence ID" value="ABF91720"/>
    <property type="gene ID" value="MXAN_2022"/>
</dbReference>
<dbReference type="GeneID" id="41359432"/>
<dbReference type="KEGG" id="mxa:MXAN_2022"/>
<dbReference type="eggNOG" id="COG1678">
    <property type="taxonomic scope" value="Bacteria"/>
</dbReference>
<dbReference type="HOGENOM" id="CLU_057596_2_1_7"/>
<dbReference type="OrthoDB" id="9807486at2"/>
<dbReference type="Proteomes" id="UP000002402">
    <property type="component" value="Chromosome"/>
</dbReference>
<dbReference type="GO" id="GO:0005829">
    <property type="term" value="C:cytosol"/>
    <property type="evidence" value="ECO:0007669"/>
    <property type="project" value="TreeGrafter"/>
</dbReference>
<dbReference type="Gene3D" id="3.40.1740.10">
    <property type="entry name" value="VC0467-like"/>
    <property type="match status" value="1"/>
</dbReference>
<dbReference type="HAMAP" id="MF_00758">
    <property type="entry name" value="UPF0301"/>
    <property type="match status" value="1"/>
</dbReference>
<dbReference type="InterPro" id="IPR003774">
    <property type="entry name" value="AlgH-like"/>
</dbReference>
<dbReference type="PANTHER" id="PTHR30327">
    <property type="entry name" value="UNCHARACTERIZED PROTEIN YQGE"/>
    <property type="match status" value="1"/>
</dbReference>
<dbReference type="PANTHER" id="PTHR30327:SF1">
    <property type="entry name" value="UPF0301 PROTEIN YQGE"/>
    <property type="match status" value="1"/>
</dbReference>
<dbReference type="Pfam" id="PF02622">
    <property type="entry name" value="DUF179"/>
    <property type="match status" value="1"/>
</dbReference>
<dbReference type="SUPFAM" id="SSF143456">
    <property type="entry name" value="VC0467-like"/>
    <property type="match status" value="1"/>
</dbReference>
<comment type="similarity">
    <text evidence="1">Belongs to the UPF0301 (AlgH) family.</text>
</comment>
<gene>
    <name type="ordered locus">MXAN_2022</name>
</gene>
<reference key="1">
    <citation type="journal article" date="2006" name="Proc. Natl. Acad. Sci. U.S.A.">
        <title>Evolution of sensory complexity recorded in a myxobacterial genome.</title>
        <authorList>
            <person name="Goldman B.S."/>
            <person name="Nierman W.C."/>
            <person name="Kaiser D."/>
            <person name="Slater S.C."/>
            <person name="Durkin A.S."/>
            <person name="Eisen J.A."/>
            <person name="Ronning C.M."/>
            <person name="Barbazuk W.B."/>
            <person name="Blanchard M."/>
            <person name="Field C."/>
            <person name="Halling C."/>
            <person name="Hinkle G."/>
            <person name="Iartchuk O."/>
            <person name="Kim H.S."/>
            <person name="Mackenzie C."/>
            <person name="Madupu R."/>
            <person name="Miller N."/>
            <person name="Shvartsbeyn A."/>
            <person name="Sullivan S.A."/>
            <person name="Vaudin M."/>
            <person name="Wiegand R."/>
            <person name="Kaplan H.B."/>
        </authorList>
    </citation>
    <scope>NUCLEOTIDE SEQUENCE [LARGE SCALE GENOMIC DNA]</scope>
    <source>
        <strain>DK1622</strain>
    </source>
</reference>
<feature type="chain" id="PRO_0000258843" description="UPF0301 protein MXAN_2022">
    <location>
        <begin position="1"/>
        <end position="181"/>
    </location>
</feature>
<sequence length="181" mass="19512">MKNLAPGLLLAMPQLGDPNFYRSVVLMLEHSESGSMGLVINRGAPLTLGELARGQNLGIAAGRKEHSVYLGGPVEPQRGFVLHDDTEQREKHSVLPGLFLSVTLDALGPLLTNPNPRLRFCLGYAGWGPRQLESEIAAGSWLFTEATAEAVLGHEPSKLWDTTLRGMGVDPAMLVMGRGMN</sequence>
<protein>
    <recommendedName>
        <fullName evidence="1">UPF0301 protein MXAN_2022</fullName>
    </recommendedName>
</protein>
<keyword id="KW-1185">Reference proteome</keyword>
<proteinExistence type="inferred from homology"/>
<accession>Q1DAS2</accession>
<organism>
    <name type="scientific">Myxococcus xanthus (strain DK1622)</name>
    <dbReference type="NCBI Taxonomy" id="246197"/>
    <lineage>
        <taxon>Bacteria</taxon>
        <taxon>Pseudomonadati</taxon>
        <taxon>Myxococcota</taxon>
        <taxon>Myxococcia</taxon>
        <taxon>Myxococcales</taxon>
        <taxon>Cystobacterineae</taxon>
        <taxon>Myxococcaceae</taxon>
        <taxon>Myxococcus</taxon>
    </lineage>
</organism>
<evidence type="ECO:0000255" key="1">
    <source>
        <dbReference type="HAMAP-Rule" id="MF_00758"/>
    </source>
</evidence>